<organism>
    <name type="scientific">Chlamydia trachomatis serovar L2b (strain UCH-1/proctitis)</name>
    <dbReference type="NCBI Taxonomy" id="471473"/>
    <lineage>
        <taxon>Bacteria</taxon>
        <taxon>Pseudomonadati</taxon>
        <taxon>Chlamydiota</taxon>
        <taxon>Chlamydiia</taxon>
        <taxon>Chlamydiales</taxon>
        <taxon>Chlamydiaceae</taxon>
        <taxon>Chlamydia/Chlamydophila group</taxon>
        <taxon>Chlamydia</taxon>
    </lineage>
</organism>
<gene>
    <name type="ordered locus">CTLon_0458</name>
</gene>
<dbReference type="EMBL" id="AM884177">
    <property type="protein sequence ID" value="CAP06856.1"/>
    <property type="molecule type" value="Genomic_DNA"/>
</dbReference>
<dbReference type="RefSeq" id="WP_009873642.1">
    <property type="nucleotide sequence ID" value="NC_010280.2"/>
</dbReference>
<dbReference type="SMR" id="B0BBJ1"/>
<dbReference type="KEGG" id="ctl:CTLon_0458"/>
<dbReference type="HOGENOM" id="CLU_057596_2_1_0"/>
<dbReference type="Proteomes" id="UP001154401">
    <property type="component" value="Chromosome"/>
</dbReference>
<dbReference type="GO" id="GO:0005829">
    <property type="term" value="C:cytosol"/>
    <property type="evidence" value="ECO:0007669"/>
    <property type="project" value="TreeGrafter"/>
</dbReference>
<dbReference type="Gene3D" id="3.40.1740.10">
    <property type="entry name" value="VC0467-like"/>
    <property type="match status" value="1"/>
</dbReference>
<dbReference type="HAMAP" id="MF_00758">
    <property type="entry name" value="UPF0301"/>
    <property type="match status" value="1"/>
</dbReference>
<dbReference type="InterPro" id="IPR003774">
    <property type="entry name" value="AlgH-like"/>
</dbReference>
<dbReference type="NCBIfam" id="NF001271">
    <property type="entry name" value="PRK00228.2-3"/>
    <property type="match status" value="1"/>
</dbReference>
<dbReference type="PANTHER" id="PTHR30327">
    <property type="entry name" value="UNCHARACTERIZED PROTEIN YQGE"/>
    <property type="match status" value="1"/>
</dbReference>
<dbReference type="PANTHER" id="PTHR30327:SF1">
    <property type="entry name" value="UPF0301 PROTEIN YQGE"/>
    <property type="match status" value="1"/>
</dbReference>
<dbReference type="Pfam" id="PF02622">
    <property type="entry name" value="DUF179"/>
    <property type="match status" value="1"/>
</dbReference>
<dbReference type="SUPFAM" id="SSF143456">
    <property type="entry name" value="VC0467-like"/>
    <property type="match status" value="1"/>
</dbReference>
<accession>B0BBJ1</accession>
<feature type="chain" id="PRO_1000198262" description="UPF0301 protein CTLon_0458">
    <location>
        <begin position="1"/>
        <end position="189"/>
    </location>
</feature>
<name>Y458_CHLTB</name>
<sequence>MTKLPYALLDKGSLLVASPDVNGGIFSRSVVLLCEHSPNGSFGLILNKILEIDSPEEIFPLDHFDESKVRFCMGGPLQANQIMLLHTSPDSANSSIEICPSVFLGGDFSFAGEKEGRTRDDKMLLCFGYSGWQGGQLEKEFLEGLWFLAPSSQEIIFTDAPERMWSDVLQHLGGRFASLSTIPENLLLN</sequence>
<protein>
    <recommendedName>
        <fullName evidence="1">UPF0301 protein CTLon_0458</fullName>
    </recommendedName>
</protein>
<reference key="1">
    <citation type="journal article" date="2008" name="Genome Res.">
        <title>Chlamydia trachomatis: genome sequence analysis of lymphogranuloma venereum isolates.</title>
        <authorList>
            <person name="Thomson N.R."/>
            <person name="Holden M.T.G."/>
            <person name="Carder C."/>
            <person name="Lennard N."/>
            <person name="Lockey S.J."/>
            <person name="Marsh P."/>
            <person name="Skipp P."/>
            <person name="O'Connor C.D."/>
            <person name="Goodhead I."/>
            <person name="Norbertzcak H."/>
            <person name="Harris B."/>
            <person name="Ormond D."/>
            <person name="Rance R."/>
            <person name="Quail M.A."/>
            <person name="Parkhill J."/>
            <person name="Stephens R.S."/>
            <person name="Clarke I.N."/>
        </authorList>
    </citation>
    <scope>NUCLEOTIDE SEQUENCE [LARGE SCALE GENOMIC DNA]</scope>
    <source>
        <strain>UCH-1/proctitis</strain>
    </source>
</reference>
<comment type="similarity">
    <text evidence="1">Belongs to the UPF0301 (AlgH) family.</text>
</comment>
<proteinExistence type="inferred from homology"/>
<evidence type="ECO:0000255" key="1">
    <source>
        <dbReference type="HAMAP-Rule" id="MF_00758"/>
    </source>
</evidence>